<proteinExistence type="evidence at protein level"/>
<dbReference type="EC" id="3.1.27.-"/>
<dbReference type="EMBL" id="X53697">
    <property type="protein sequence ID" value="CAA37735.1"/>
    <property type="molecule type" value="Genomic_DNA"/>
</dbReference>
<dbReference type="PIR" id="A00796">
    <property type="entry name" value="NRBSI"/>
</dbReference>
<dbReference type="PIR" id="S22653">
    <property type="entry name" value="S22653"/>
</dbReference>
<dbReference type="PDB" id="1BUJ">
    <property type="method" value="NMR"/>
    <property type="chains" value="A=54-162"/>
</dbReference>
<dbReference type="PDB" id="1GOU">
    <property type="method" value="X-ray"/>
    <property type="resolution" value="1.65 A"/>
    <property type="chains" value="A/B=54-162"/>
</dbReference>
<dbReference type="PDB" id="1GOV">
    <property type="method" value="X-ray"/>
    <property type="resolution" value="2.00 A"/>
    <property type="chains" value="A/B=54-162"/>
</dbReference>
<dbReference type="PDB" id="1GOY">
    <property type="method" value="X-ray"/>
    <property type="resolution" value="2.00 A"/>
    <property type="chains" value="A/B=54-162"/>
</dbReference>
<dbReference type="PDB" id="2RBI">
    <property type="method" value="X-ray"/>
    <property type="resolution" value="2.20 A"/>
    <property type="chains" value="A/B=54-162"/>
</dbReference>
<dbReference type="PDB" id="4HAA">
    <property type="method" value="X-ray"/>
    <property type="resolution" value="1.90 A"/>
    <property type="chains" value="A/B/C/D=54-162"/>
</dbReference>
<dbReference type="PDBsum" id="1BUJ"/>
<dbReference type="PDBsum" id="1GOU"/>
<dbReference type="PDBsum" id="1GOV"/>
<dbReference type="PDBsum" id="1GOY"/>
<dbReference type="PDBsum" id="2RBI"/>
<dbReference type="PDBsum" id="4HAA"/>
<dbReference type="SMR" id="P00649"/>
<dbReference type="BRENDA" id="4.6.1.24">
    <property type="organism ID" value="664"/>
</dbReference>
<dbReference type="EvolutionaryTrace" id="P00649"/>
<dbReference type="GO" id="GO:0005576">
    <property type="term" value="C:extracellular region"/>
    <property type="evidence" value="ECO:0007669"/>
    <property type="project" value="UniProtKB-SubCell"/>
</dbReference>
<dbReference type="GO" id="GO:0003723">
    <property type="term" value="F:RNA binding"/>
    <property type="evidence" value="ECO:0007669"/>
    <property type="project" value="InterPro"/>
</dbReference>
<dbReference type="GO" id="GO:0004521">
    <property type="term" value="F:RNA endonuclease activity"/>
    <property type="evidence" value="ECO:0007669"/>
    <property type="project" value="InterPro"/>
</dbReference>
<dbReference type="CDD" id="cd00933">
    <property type="entry name" value="barnase"/>
    <property type="match status" value="1"/>
</dbReference>
<dbReference type="Gene3D" id="3.10.450.30">
    <property type="entry name" value="Microbial ribonucleases"/>
    <property type="match status" value="1"/>
</dbReference>
<dbReference type="InterPro" id="IPR001887">
    <property type="entry name" value="Barnase"/>
</dbReference>
<dbReference type="InterPro" id="IPR000026">
    <property type="entry name" value="N1-like"/>
</dbReference>
<dbReference type="InterPro" id="IPR016191">
    <property type="entry name" value="Ribonuclease/ribotoxin"/>
</dbReference>
<dbReference type="Pfam" id="PF00545">
    <property type="entry name" value="Ribonuclease"/>
    <property type="match status" value="1"/>
</dbReference>
<dbReference type="PIRSF" id="PIRSF001013">
    <property type="entry name" value="Barnase"/>
    <property type="match status" value="1"/>
</dbReference>
<dbReference type="PRINTS" id="PR00117">
    <property type="entry name" value="BARNASE"/>
</dbReference>
<dbReference type="SUPFAM" id="SSF53933">
    <property type="entry name" value="Microbial ribonucleases"/>
    <property type="match status" value="1"/>
</dbReference>
<sequence>MKKISSVFTMFALIAAILFSGFIPQQAYAETPLTQTATNETATIQLTSDVHTLAVINTFDGVADYLIRYKRLPDNYITKSQASALGWVASKGNLAEVAPGKSIGGDVFSNREGRLPSASGRTWREADINYVSGFRNADRLVYSSDWLIYKTTDHYATFTRIR</sequence>
<reference key="1">
    <citation type="journal article" date="1992" name="Nucleic Acids Res.">
        <title>Cloning of the gene encoding RNase binase from Bacillus intermedius 7P.</title>
        <authorList>
            <person name="Schulga A.A."/>
            <person name="Nurkiyanova K.M."/>
            <person name="Zakharyev V.M."/>
            <person name="Kirpichnikov M.P."/>
            <person name="Skryabin K.G."/>
        </authorList>
    </citation>
    <scope>NUCLEOTIDE SEQUENCE [GENOMIC DNA]</scope>
    <source>
        <strain>7P</strain>
    </source>
</reference>
<reference key="2">
    <citation type="journal article" date="1989" name="Dokl. Akad. Nauk SSSR">
        <title>The cloning and determination of the nucleotide sequence of the RNase gene in Bacillus intermedius.</title>
        <authorList>
            <person name="Nurkiyanova K.M."/>
            <person name="Shulga A.A."/>
            <person name="Zakharyev V.M."/>
            <person name="Kirpichnikov M.P."/>
            <person name="Skryabin K.G."/>
            <person name="Baev A.A."/>
        </authorList>
    </citation>
    <scope>NUCLEOTIDE SEQUENCE [GENOMIC DNA]</scope>
    <source>
        <strain>7P</strain>
    </source>
</reference>
<reference key="3">
    <citation type="journal article" date="1979" name="FEBS Lett.">
        <title>Primary structure of ribonuclease from Bacillus intermedius 7P.</title>
        <authorList>
            <person name="Aphanasenko G.A."/>
            <person name="Dudkin S.M."/>
            <person name="Kaminir L.B."/>
            <person name="Leshchinskaya I.B."/>
            <person name="Severin E.S."/>
        </authorList>
    </citation>
    <scope>PROTEIN SEQUENCE OF 54-162</scope>
    <source>
        <strain>7P</strain>
    </source>
</reference>
<reference key="4">
    <citation type="journal article" date="1997" name="Protein Eng.">
        <title>RNA cleavage without hydrolysis. Splitting the catalytic activities of binase with Asn101 and Thr101 mutations.</title>
        <authorList>
            <person name="Okorokov A.L."/>
            <person name="Panov K.I."/>
            <person name="Offen W.A."/>
            <person name="Mukhortov V.G."/>
            <person name="Antson A.A."/>
            <person name="Karpeisky M.Y."/>
            <person name="Wilkinson A.J."/>
            <person name="Dodson G.G."/>
        </authorList>
    </citation>
    <scope>X-RAY CRYSTALLOGRAPHY (2.2 ANGSTROMS) AND MUTAGENESIS OF HIS-154</scope>
</reference>
<reference key="5">
    <citation type="journal article" date="1998" name="FEBS Lett.">
        <title>Three-dimensional structure of binase in solution.</title>
        <authorList>
            <person name="Reibarkh M.Y.A."/>
            <person name="Nolde D.E."/>
            <person name="Vasilieva L.I."/>
            <person name="Bocharov E.V."/>
            <person name="Shulga A.A."/>
            <person name="Kirpichnikov M.P."/>
            <person name="Arseniev A.S."/>
        </authorList>
    </citation>
    <scope>STRUCTURE BY NMR</scope>
</reference>
<reference key="6">
    <citation type="journal article" date="2002" name="Acta Crystallogr. D">
        <title>The structure of substrate-free microbial ribonuclease binase and of its complexes with 3'GMP and sulfate ions.</title>
        <authorList>
            <person name="Polyakov K.M."/>
            <person name="Lebedev A.A."/>
            <person name="Okorokov A.L."/>
            <person name="Panov K.I."/>
            <person name="Schulga A.A."/>
            <person name="Pavlovsky A.G."/>
            <person name="Karpeisky M.Y."/>
            <person name="Dodson G.G."/>
        </authorList>
    </citation>
    <scope>X-RAY CRYSTALLOGRAPHY (1.65 ANGSTROMS) OF 54-162</scope>
</reference>
<accession>P00649</accession>
<feature type="signal peptide" evidence="1">
    <location>
        <begin position="1"/>
        <end position="29"/>
    </location>
</feature>
<feature type="propeptide" id="PRO_0000030824" evidence="2">
    <location>
        <begin position="30"/>
        <end position="53"/>
    </location>
</feature>
<feature type="chain" id="PRO_0000030825" description="Ribonuclease">
    <location>
        <begin position="54"/>
        <end position="162"/>
    </location>
</feature>
<feature type="active site" description="Proton acceptor">
    <location>
        <position position="125"/>
    </location>
</feature>
<feature type="active site" description="Proton donor">
    <location>
        <position position="154"/>
    </location>
</feature>
<feature type="sequence conflict" description="In Ref. 3; AA sequence." evidence="3" ref="3">
    <original>DN</original>
    <variation>ND</variation>
    <location>
        <begin position="74"/>
        <end position="75"/>
    </location>
</feature>
<feature type="sequence conflict" description="In Ref. 3; AA sequence." evidence="3" ref="3">
    <original>N</original>
    <variation>D</variation>
    <location>
        <position position="93"/>
    </location>
</feature>
<feature type="sequence conflict" description="In Ref. 3; AA sequence." evidence="3" ref="3">
    <original>SG</original>
    <variation>GS</variation>
    <location>
        <begin position="119"/>
        <end position="120"/>
    </location>
</feature>
<feature type="helix" evidence="5">
    <location>
        <begin position="59"/>
        <end position="69"/>
    </location>
</feature>
<feature type="helix" evidence="5">
    <location>
        <begin position="79"/>
        <end position="84"/>
    </location>
</feature>
<feature type="helix" evidence="5">
    <location>
        <begin position="89"/>
        <end position="91"/>
    </location>
</feature>
<feature type="helix" evidence="5">
    <location>
        <begin position="94"/>
        <end position="97"/>
    </location>
</feature>
<feature type="strand" evidence="5">
    <location>
        <begin position="102"/>
        <end position="108"/>
    </location>
</feature>
<feature type="strand" evidence="4">
    <location>
        <begin position="112"/>
        <end position="115"/>
    </location>
</feature>
<feature type="strand" evidence="4">
    <location>
        <begin position="118"/>
        <end position="120"/>
    </location>
</feature>
<feature type="strand" evidence="5">
    <location>
        <begin position="123"/>
        <end position="127"/>
    </location>
</feature>
<feature type="strand" evidence="5">
    <location>
        <begin position="132"/>
        <end position="134"/>
    </location>
</feature>
<feature type="strand" evidence="5">
    <location>
        <begin position="139"/>
        <end position="143"/>
    </location>
</feature>
<feature type="strand" evidence="5">
    <location>
        <begin position="148"/>
        <end position="153"/>
    </location>
</feature>
<feature type="strand" evidence="5">
    <location>
        <begin position="159"/>
        <end position="162"/>
    </location>
</feature>
<name>RN_BACIN</name>
<organism>
    <name type="scientific">Bacillus intermedius</name>
    <dbReference type="NCBI Taxonomy" id="1400"/>
    <lineage>
        <taxon>Bacteria</taxon>
        <taxon>Bacillati</taxon>
        <taxon>Bacillota</taxon>
        <taxon>Bacilli</taxon>
        <taxon>Bacillales</taxon>
        <taxon>Bacillaceae</taxon>
        <taxon>Bacillus</taxon>
    </lineage>
</organism>
<protein>
    <recommendedName>
        <fullName>Ribonuclease</fullName>
        <ecNumber>3.1.27.-</ecNumber>
    </recommendedName>
    <alternativeName>
        <fullName>Binase</fullName>
    </alternativeName>
    <alternativeName>
        <fullName>RNase Bi</fullName>
    </alternativeName>
</protein>
<keyword id="KW-0002">3D-structure</keyword>
<keyword id="KW-0903">Direct protein sequencing</keyword>
<keyword id="KW-0255">Endonuclease</keyword>
<keyword id="KW-0378">Hydrolase</keyword>
<keyword id="KW-0540">Nuclease</keyword>
<keyword id="KW-0964">Secreted</keyword>
<keyword id="KW-0732">Signal</keyword>
<evidence type="ECO:0000255" key="1"/>
<evidence type="ECO:0000269" key="2">
    <source>
    </source>
</evidence>
<evidence type="ECO:0000305" key="3"/>
<evidence type="ECO:0007829" key="4">
    <source>
        <dbReference type="PDB" id="1BUJ"/>
    </source>
</evidence>
<evidence type="ECO:0007829" key="5">
    <source>
        <dbReference type="PDB" id="1GOU"/>
    </source>
</evidence>
<comment type="function">
    <text>This is a purine-specific ribonuclease.</text>
</comment>
<comment type="subcellular location">
    <subcellularLocation>
        <location>Secreted</location>
    </subcellularLocation>
</comment>
<comment type="similarity">
    <text evidence="3">Belongs to the ribonuclease N1/T1 family.</text>
</comment>